<accession>Q63E31</accession>
<sequence>MKKEKAVVVFSGGQDSTTCLFWAIEQFAEVEAVTFNYNQRHKLEIDCAAEIAKELGIKHTVLDMSLLNQLAPNALTRTDMEITHEEGELPSTFVDGRNLLFLSFAAVLAKQVGARHIVTGVCETDFSGYPDCRDVFVKSLNVTLNLSMDYPFVIHTPLMWIDKAETWKLSDELGAFEFVREKTLTCYNGIIGDGCGECPACQLRKAGLDTYLQEREGASN</sequence>
<feature type="chain" id="PRO_0000246797" description="7-cyano-7-deazaguanine synthase">
    <location>
        <begin position="1"/>
        <end position="220"/>
    </location>
</feature>
<feature type="binding site" evidence="1">
    <location>
        <begin position="10"/>
        <end position="20"/>
    </location>
    <ligand>
        <name>ATP</name>
        <dbReference type="ChEBI" id="CHEBI:30616"/>
    </ligand>
</feature>
<feature type="binding site" evidence="1">
    <location>
        <position position="186"/>
    </location>
    <ligand>
        <name>Zn(2+)</name>
        <dbReference type="ChEBI" id="CHEBI:29105"/>
    </ligand>
</feature>
<feature type="binding site" evidence="1">
    <location>
        <position position="195"/>
    </location>
    <ligand>
        <name>Zn(2+)</name>
        <dbReference type="ChEBI" id="CHEBI:29105"/>
    </ligand>
</feature>
<feature type="binding site" evidence="1">
    <location>
        <position position="198"/>
    </location>
    <ligand>
        <name>Zn(2+)</name>
        <dbReference type="ChEBI" id="CHEBI:29105"/>
    </ligand>
</feature>
<feature type="binding site" evidence="1">
    <location>
        <position position="201"/>
    </location>
    <ligand>
        <name>Zn(2+)</name>
        <dbReference type="ChEBI" id="CHEBI:29105"/>
    </ligand>
</feature>
<comment type="function">
    <text evidence="1">Catalyzes the ATP-dependent conversion of 7-carboxy-7-deazaguanine (CDG) to 7-cyano-7-deazaguanine (preQ(0)).</text>
</comment>
<comment type="catalytic activity">
    <reaction evidence="1">
        <text>7-carboxy-7-deazaguanine + NH4(+) + ATP = 7-cyano-7-deazaguanine + ADP + phosphate + H2O + H(+)</text>
        <dbReference type="Rhea" id="RHEA:27982"/>
        <dbReference type="ChEBI" id="CHEBI:15377"/>
        <dbReference type="ChEBI" id="CHEBI:15378"/>
        <dbReference type="ChEBI" id="CHEBI:28938"/>
        <dbReference type="ChEBI" id="CHEBI:30616"/>
        <dbReference type="ChEBI" id="CHEBI:43474"/>
        <dbReference type="ChEBI" id="CHEBI:45075"/>
        <dbReference type="ChEBI" id="CHEBI:61036"/>
        <dbReference type="ChEBI" id="CHEBI:456216"/>
        <dbReference type="EC" id="6.3.4.20"/>
    </reaction>
</comment>
<comment type="cofactor">
    <cofactor evidence="1">
        <name>Zn(2+)</name>
        <dbReference type="ChEBI" id="CHEBI:29105"/>
    </cofactor>
    <text evidence="1">Binds 1 zinc ion per subunit.</text>
</comment>
<comment type="pathway">
    <text evidence="1">Purine metabolism; 7-cyano-7-deazaguanine biosynthesis.</text>
</comment>
<comment type="subunit">
    <text evidence="1">Homodimer.</text>
</comment>
<comment type="similarity">
    <text evidence="1">Belongs to the QueC family.</text>
</comment>
<evidence type="ECO:0000255" key="1">
    <source>
        <dbReference type="HAMAP-Rule" id="MF_01633"/>
    </source>
</evidence>
<dbReference type="EC" id="6.3.4.20" evidence="1"/>
<dbReference type="EMBL" id="CP000001">
    <property type="protein sequence ID" value="AAU19015.1"/>
    <property type="molecule type" value="Genomic_DNA"/>
</dbReference>
<dbReference type="RefSeq" id="WP_000711596.1">
    <property type="nucleotide sequence ID" value="NZ_CP009968.1"/>
</dbReference>
<dbReference type="SMR" id="Q63E31"/>
<dbReference type="GeneID" id="93009699"/>
<dbReference type="KEGG" id="bcz:BCE33L1232"/>
<dbReference type="PATRIC" id="fig|288681.22.peg.4328"/>
<dbReference type="UniPathway" id="UPA00391"/>
<dbReference type="Proteomes" id="UP000002612">
    <property type="component" value="Chromosome"/>
</dbReference>
<dbReference type="GO" id="GO:0005524">
    <property type="term" value="F:ATP binding"/>
    <property type="evidence" value="ECO:0007669"/>
    <property type="project" value="UniProtKB-UniRule"/>
</dbReference>
<dbReference type="GO" id="GO:0016879">
    <property type="term" value="F:ligase activity, forming carbon-nitrogen bonds"/>
    <property type="evidence" value="ECO:0007669"/>
    <property type="project" value="UniProtKB-UniRule"/>
</dbReference>
<dbReference type="GO" id="GO:0008270">
    <property type="term" value="F:zinc ion binding"/>
    <property type="evidence" value="ECO:0007669"/>
    <property type="project" value="UniProtKB-UniRule"/>
</dbReference>
<dbReference type="GO" id="GO:0008616">
    <property type="term" value="P:queuosine biosynthetic process"/>
    <property type="evidence" value="ECO:0007669"/>
    <property type="project" value="UniProtKB-UniRule"/>
</dbReference>
<dbReference type="CDD" id="cd01995">
    <property type="entry name" value="QueC-like"/>
    <property type="match status" value="1"/>
</dbReference>
<dbReference type="FunFam" id="3.40.50.620:FF:000017">
    <property type="entry name" value="7-cyano-7-deazaguanine synthase"/>
    <property type="match status" value="1"/>
</dbReference>
<dbReference type="Gene3D" id="3.40.50.620">
    <property type="entry name" value="HUPs"/>
    <property type="match status" value="1"/>
</dbReference>
<dbReference type="HAMAP" id="MF_01633">
    <property type="entry name" value="QueC"/>
    <property type="match status" value="1"/>
</dbReference>
<dbReference type="InterPro" id="IPR018317">
    <property type="entry name" value="QueC"/>
</dbReference>
<dbReference type="InterPro" id="IPR014729">
    <property type="entry name" value="Rossmann-like_a/b/a_fold"/>
</dbReference>
<dbReference type="NCBIfam" id="TIGR00364">
    <property type="entry name" value="7-cyano-7-deazaguanine synthase QueC"/>
    <property type="match status" value="1"/>
</dbReference>
<dbReference type="PANTHER" id="PTHR42914">
    <property type="entry name" value="7-CYANO-7-DEAZAGUANINE SYNTHASE"/>
    <property type="match status" value="1"/>
</dbReference>
<dbReference type="PANTHER" id="PTHR42914:SF1">
    <property type="entry name" value="7-CYANO-7-DEAZAGUANINE SYNTHASE"/>
    <property type="match status" value="1"/>
</dbReference>
<dbReference type="Pfam" id="PF06508">
    <property type="entry name" value="QueC"/>
    <property type="match status" value="1"/>
</dbReference>
<dbReference type="PIRSF" id="PIRSF006293">
    <property type="entry name" value="ExsB"/>
    <property type="match status" value="1"/>
</dbReference>
<dbReference type="SUPFAM" id="SSF52402">
    <property type="entry name" value="Adenine nucleotide alpha hydrolases-like"/>
    <property type="match status" value="1"/>
</dbReference>
<keyword id="KW-0067">ATP-binding</keyword>
<keyword id="KW-0436">Ligase</keyword>
<keyword id="KW-0479">Metal-binding</keyword>
<keyword id="KW-0547">Nucleotide-binding</keyword>
<keyword id="KW-0671">Queuosine biosynthesis</keyword>
<keyword id="KW-0862">Zinc</keyword>
<organism>
    <name type="scientific">Bacillus cereus (strain ZK / E33L)</name>
    <dbReference type="NCBI Taxonomy" id="288681"/>
    <lineage>
        <taxon>Bacteria</taxon>
        <taxon>Bacillati</taxon>
        <taxon>Bacillota</taxon>
        <taxon>Bacilli</taxon>
        <taxon>Bacillales</taxon>
        <taxon>Bacillaceae</taxon>
        <taxon>Bacillus</taxon>
        <taxon>Bacillus cereus group</taxon>
    </lineage>
</organism>
<reference key="1">
    <citation type="journal article" date="2006" name="J. Bacteriol.">
        <title>Pathogenomic sequence analysis of Bacillus cereus and Bacillus thuringiensis isolates closely related to Bacillus anthracis.</title>
        <authorList>
            <person name="Han C.S."/>
            <person name="Xie G."/>
            <person name="Challacombe J.F."/>
            <person name="Altherr M.R."/>
            <person name="Bhotika S.S."/>
            <person name="Bruce D."/>
            <person name="Campbell C.S."/>
            <person name="Campbell M.L."/>
            <person name="Chen J."/>
            <person name="Chertkov O."/>
            <person name="Cleland C."/>
            <person name="Dimitrijevic M."/>
            <person name="Doggett N.A."/>
            <person name="Fawcett J.J."/>
            <person name="Glavina T."/>
            <person name="Goodwin L.A."/>
            <person name="Hill K.K."/>
            <person name="Hitchcock P."/>
            <person name="Jackson P.J."/>
            <person name="Keim P."/>
            <person name="Kewalramani A.R."/>
            <person name="Longmire J."/>
            <person name="Lucas S."/>
            <person name="Malfatti S."/>
            <person name="McMurry K."/>
            <person name="Meincke L.J."/>
            <person name="Misra M."/>
            <person name="Moseman B.L."/>
            <person name="Mundt M."/>
            <person name="Munk A.C."/>
            <person name="Okinaka R.T."/>
            <person name="Parson-Quintana B."/>
            <person name="Reilly L.P."/>
            <person name="Richardson P."/>
            <person name="Robinson D.L."/>
            <person name="Rubin E."/>
            <person name="Saunders E."/>
            <person name="Tapia R."/>
            <person name="Tesmer J.G."/>
            <person name="Thayer N."/>
            <person name="Thompson L.S."/>
            <person name="Tice H."/>
            <person name="Ticknor L.O."/>
            <person name="Wills P.L."/>
            <person name="Brettin T.S."/>
            <person name="Gilna P."/>
        </authorList>
    </citation>
    <scope>NUCLEOTIDE SEQUENCE [LARGE SCALE GENOMIC DNA]</scope>
    <source>
        <strain>ZK / E33L</strain>
    </source>
</reference>
<name>QUEC_BACCZ</name>
<protein>
    <recommendedName>
        <fullName evidence="1">7-cyano-7-deazaguanine synthase</fullName>
        <ecNumber evidence="1">6.3.4.20</ecNumber>
    </recommendedName>
    <alternativeName>
        <fullName evidence="1">7-cyano-7-carbaguanine synthase</fullName>
    </alternativeName>
    <alternativeName>
        <fullName evidence="1">PreQ(0) synthase</fullName>
    </alternativeName>
    <alternativeName>
        <fullName evidence="1">Queuosine biosynthesis protein QueC</fullName>
    </alternativeName>
</protein>
<gene>
    <name evidence="1" type="primary">queC</name>
    <name type="ordered locus">BCE33L1232</name>
</gene>
<proteinExistence type="inferred from homology"/>